<protein>
    <recommendedName>
        <fullName evidence="1">Protein RecA</fullName>
    </recommendedName>
    <alternativeName>
        <fullName evidence="1">Recombinase A</fullName>
    </alternativeName>
</protein>
<dbReference type="EMBL" id="CP001279">
    <property type="protein sequence ID" value="ACM93001.1"/>
    <property type="molecule type" value="Genomic_DNA"/>
</dbReference>
<dbReference type="RefSeq" id="WP_015902053.1">
    <property type="nucleotide sequence ID" value="NC_012115.1"/>
</dbReference>
<dbReference type="SMR" id="B9L7U2"/>
<dbReference type="STRING" id="598659.NAMH_0276"/>
<dbReference type="KEGG" id="nam:NAMH_0276"/>
<dbReference type="eggNOG" id="COG0468">
    <property type="taxonomic scope" value="Bacteria"/>
</dbReference>
<dbReference type="HOGENOM" id="CLU_040469_1_2_7"/>
<dbReference type="OrthoDB" id="9776733at2"/>
<dbReference type="Proteomes" id="UP000000448">
    <property type="component" value="Chromosome"/>
</dbReference>
<dbReference type="GO" id="GO:0005829">
    <property type="term" value="C:cytosol"/>
    <property type="evidence" value="ECO:0007669"/>
    <property type="project" value="TreeGrafter"/>
</dbReference>
<dbReference type="GO" id="GO:0005524">
    <property type="term" value="F:ATP binding"/>
    <property type="evidence" value="ECO:0007669"/>
    <property type="project" value="UniProtKB-UniRule"/>
</dbReference>
<dbReference type="GO" id="GO:0016887">
    <property type="term" value="F:ATP hydrolysis activity"/>
    <property type="evidence" value="ECO:0007669"/>
    <property type="project" value="InterPro"/>
</dbReference>
<dbReference type="GO" id="GO:0140664">
    <property type="term" value="F:ATP-dependent DNA damage sensor activity"/>
    <property type="evidence" value="ECO:0007669"/>
    <property type="project" value="InterPro"/>
</dbReference>
<dbReference type="GO" id="GO:0003684">
    <property type="term" value="F:damaged DNA binding"/>
    <property type="evidence" value="ECO:0007669"/>
    <property type="project" value="UniProtKB-UniRule"/>
</dbReference>
<dbReference type="GO" id="GO:0003697">
    <property type="term" value="F:single-stranded DNA binding"/>
    <property type="evidence" value="ECO:0007669"/>
    <property type="project" value="UniProtKB-UniRule"/>
</dbReference>
<dbReference type="GO" id="GO:0006310">
    <property type="term" value="P:DNA recombination"/>
    <property type="evidence" value="ECO:0007669"/>
    <property type="project" value="UniProtKB-UniRule"/>
</dbReference>
<dbReference type="GO" id="GO:0006281">
    <property type="term" value="P:DNA repair"/>
    <property type="evidence" value="ECO:0007669"/>
    <property type="project" value="UniProtKB-UniRule"/>
</dbReference>
<dbReference type="GO" id="GO:0009432">
    <property type="term" value="P:SOS response"/>
    <property type="evidence" value="ECO:0007669"/>
    <property type="project" value="UniProtKB-UniRule"/>
</dbReference>
<dbReference type="CDD" id="cd00983">
    <property type="entry name" value="RecA"/>
    <property type="match status" value="1"/>
</dbReference>
<dbReference type="FunFam" id="3.40.50.300:FF:000087">
    <property type="entry name" value="Recombinase RecA"/>
    <property type="match status" value="1"/>
</dbReference>
<dbReference type="Gene3D" id="3.40.50.300">
    <property type="entry name" value="P-loop containing nucleotide triphosphate hydrolases"/>
    <property type="match status" value="1"/>
</dbReference>
<dbReference type="HAMAP" id="MF_00268">
    <property type="entry name" value="RecA"/>
    <property type="match status" value="1"/>
</dbReference>
<dbReference type="InterPro" id="IPR003593">
    <property type="entry name" value="AAA+_ATPase"/>
</dbReference>
<dbReference type="InterPro" id="IPR013765">
    <property type="entry name" value="DNA_recomb/repair_RecA"/>
</dbReference>
<dbReference type="InterPro" id="IPR020584">
    <property type="entry name" value="DNA_recomb/repair_RecA_CS"/>
</dbReference>
<dbReference type="InterPro" id="IPR027417">
    <property type="entry name" value="P-loop_NTPase"/>
</dbReference>
<dbReference type="InterPro" id="IPR049261">
    <property type="entry name" value="RecA-like_C"/>
</dbReference>
<dbReference type="InterPro" id="IPR049428">
    <property type="entry name" value="RecA-like_N"/>
</dbReference>
<dbReference type="InterPro" id="IPR020588">
    <property type="entry name" value="RecA_ATP-bd"/>
</dbReference>
<dbReference type="InterPro" id="IPR023400">
    <property type="entry name" value="RecA_C_sf"/>
</dbReference>
<dbReference type="InterPro" id="IPR020587">
    <property type="entry name" value="RecA_monomer-monomer_interface"/>
</dbReference>
<dbReference type="NCBIfam" id="TIGR02012">
    <property type="entry name" value="tigrfam_recA"/>
    <property type="match status" value="1"/>
</dbReference>
<dbReference type="PANTHER" id="PTHR45900:SF1">
    <property type="entry name" value="MITOCHONDRIAL DNA REPAIR PROTEIN RECA HOMOLOG-RELATED"/>
    <property type="match status" value="1"/>
</dbReference>
<dbReference type="PANTHER" id="PTHR45900">
    <property type="entry name" value="RECA"/>
    <property type="match status" value="1"/>
</dbReference>
<dbReference type="Pfam" id="PF00154">
    <property type="entry name" value="RecA"/>
    <property type="match status" value="1"/>
</dbReference>
<dbReference type="Pfam" id="PF21096">
    <property type="entry name" value="RecA_C"/>
    <property type="match status" value="1"/>
</dbReference>
<dbReference type="PRINTS" id="PR00142">
    <property type="entry name" value="RECA"/>
</dbReference>
<dbReference type="SMART" id="SM00382">
    <property type="entry name" value="AAA"/>
    <property type="match status" value="1"/>
</dbReference>
<dbReference type="SUPFAM" id="SSF52540">
    <property type="entry name" value="P-loop containing nucleoside triphosphate hydrolases"/>
    <property type="match status" value="1"/>
</dbReference>
<dbReference type="SUPFAM" id="SSF54752">
    <property type="entry name" value="RecA protein, C-terminal domain"/>
    <property type="match status" value="1"/>
</dbReference>
<dbReference type="PROSITE" id="PS00321">
    <property type="entry name" value="RECA_1"/>
    <property type="match status" value="1"/>
</dbReference>
<dbReference type="PROSITE" id="PS50162">
    <property type="entry name" value="RECA_2"/>
    <property type="match status" value="1"/>
</dbReference>
<dbReference type="PROSITE" id="PS50163">
    <property type="entry name" value="RECA_3"/>
    <property type="match status" value="1"/>
</dbReference>
<accession>B9L7U2</accession>
<comment type="function">
    <text evidence="1">Can catalyze the hydrolysis of ATP in the presence of single-stranded DNA, the ATP-dependent uptake of single-stranded DNA by duplex DNA, and the ATP-dependent hybridization of homologous single-stranded DNAs. It interacts with LexA causing its activation and leading to its autocatalytic cleavage.</text>
</comment>
<comment type="subcellular location">
    <subcellularLocation>
        <location evidence="1">Cytoplasm</location>
    </subcellularLocation>
</comment>
<comment type="similarity">
    <text evidence="1">Belongs to the RecA family.</text>
</comment>
<name>RECA_NAUPA</name>
<gene>
    <name evidence="1" type="primary">recA</name>
    <name type="ordered locus">NAMH_0276</name>
</gene>
<sequence>MDANKQKALELAMKQIDKQFGKGSLVKLSDKDIEPIAAIPTGSFGLDLALGIGGIPKGRITEIYGPESSGKTTLALSIIAQAQKDGGVAAFIDAEHALDVIYAKHIGVDVDNLLVSQPDYGEQALEIVETLARSGAVDIIVIDSVAALTPKAEIEGNMGDAQVGVQARLMSQALRKLTAAIHKMNTTVVFINQIRMKIGMMGYGSPETTTGGNALKFYSSVRLDVRRIATLKQADKEVGNRVKVKVVKNKVAPPFRIAEFDIMFGKGISREGELLDYGVKLDIIDKSGAWFSYGATRLGQGKENAKEYLKSHPELAQEIEQKIKDALGVELSHMIEAIEKDEDELNLKGE</sequence>
<organism>
    <name type="scientific">Nautilia profundicola (strain ATCC BAA-1463 / DSM 18972 / AmH)</name>
    <dbReference type="NCBI Taxonomy" id="598659"/>
    <lineage>
        <taxon>Bacteria</taxon>
        <taxon>Pseudomonadati</taxon>
        <taxon>Campylobacterota</taxon>
        <taxon>Epsilonproteobacteria</taxon>
        <taxon>Nautiliales</taxon>
        <taxon>Nautiliaceae</taxon>
        <taxon>Nautilia</taxon>
    </lineage>
</organism>
<feature type="chain" id="PRO_1000193319" description="Protein RecA">
    <location>
        <begin position="1"/>
        <end position="350"/>
    </location>
</feature>
<feature type="binding site" evidence="1">
    <location>
        <begin position="65"/>
        <end position="72"/>
    </location>
    <ligand>
        <name>ATP</name>
        <dbReference type="ChEBI" id="CHEBI:30616"/>
    </ligand>
</feature>
<evidence type="ECO:0000255" key="1">
    <source>
        <dbReference type="HAMAP-Rule" id="MF_00268"/>
    </source>
</evidence>
<reference key="1">
    <citation type="journal article" date="2009" name="PLoS Genet.">
        <title>Adaptations to submarine hydrothermal environments exemplified by the genome of Nautilia profundicola.</title>
        <authorList>
            <person name="Campbell B.J."/>
            <person name="Smith J.L."/>
            <person name="Hanson T.E."/>
            <person name="Klotz M.G."/>
            <person name="Stein L.Y."/>
            <person name="Lee C.K."/>
            <person name="Wu D."/>
            <person name="Robinson J.M."/>
            <person name="Khouri H.M."/>
            <person name="Eisen J.A."/>
            <person name="Cary S.C."/>
        </authorList>
    </citation>
    <scope>NUCLEOTIDE SEQUENCE [LARGE SCALE GENOMIC DNA]</scope>
    <source>
        <strain>ATCC BAA-1463 / DSM 18972 / AmH</strain>
    </source>
</reference>
<proteinExistence type="inferred from homology"/>
<keyword id="KW-0067">ATP-binding</keyword>
<keyword id="KW-0963">Cytoplasm</keyword>
<keyword id="KW-0227">DNA damage</keyword>
<keyword id="KW-0233">DNA recombination</keyword>
<keyword id="KW-0234">DNA repair</keyword>
<keyword id="KW-0238">DNA-binding</keyword>
<keyword id="KW-0547">Nucleotide-binding</keyword>
<keyword id="KW-0742">SOS response</keyword>